<feature type="chain" id="PRO_0000111254" description="Small ribosomal subunit protein bS18">
    <location>
        <begin position="1"/>
        <end position="99"/>
    </location>
</feature>
<feature type="region of interest" description="Disordered" evidence="2">
    <location>
        <begin position="1"/>
        <end position="28"/>
    </location>
</feature>
<feature type="compositionally biased region" description="Basic and acidic residues" evidence="2">
    <location>
        <begin position="1"/>
        <end position="25"/>
    </location>
</feature>
<accession>O83100</accession>
<comment type="function">
    <text evidence="1">Binds as a heterodimer with protein bS6 to the central domain of the 16S rRNA, where it helps stabilize the platform of the 30S subunit.</text>
</comment>
<comment type="subunit">
    <text evidence="1">Part of the 30S ribosomal subunit. Forms a tight heterodimer with protein bS6.</text>
</comment>
<comment type="similarity">
    <text evidence="1">Belongs to the bacterial ribosomal protein bS18 family.</text>
</comment>
<name>RS18_TREPA</name>
<keyword id="KW-1185">Reference proteome</keyword>
<keyword id="KW-0687">Ribonucleoprotein</keyword>
<keyword id="KW-0689">Ribosomal protein</keyword>
<keyword id="KW-0694">RNA-binding</keyword>
<keyword id="KW-0699">rRNA-binding</keyword>
<sequence>MAEDHPSVDLDTHLSSPRESEESAPKKNRQFYRKKVCRFCTQKLLADYKDPDTLRRFITERGKILPRRITGTCAKHQRRVALEVKRSRAVALLPFVLTE</sequence>
<evidence type="ECO:0000255" key="1">
    <source>
        <dbReference type="HAMAP-Rule" id="MF_00270"/>
    </source>
</evidence>
<evidence type="ECO:0000256" key="2">
    <source>
        <dbReference type="SAM" id="MobiDB-lite"/>
    </source>
</evidence>
<evidence type="ECO:0000305" key="3"/>
<reference key="1">
    <citation type="journal article" date="1998" name="Science">
        <title>Complete genome sequence of Treponema pallidum, the syphilis spirochete.</title>
        <authorList>
            <person name="Fraser C.M."/>
            <person name="Norris S.J."/>
            <person name="Weinstock G.M."/>
            <person name="White O."/>
            <person name="Sutton G.G."/>
            <person name="Dodson R.J."/>
            <person name="Gwinn M.L."/>
            <person name="Hickey E.K."/>
            <person name="Clayton R.A."/>
            <person name="Ketchum K.A."/>
            <person name="Sodergren E."/>
            <person name="Hardham J.M."/>
            <person name="McLeod M.P."/>
            <person name="Salzberg S.L."/>
            <person name="Peterson J.D."/>
            <person name="Khalak H.G."/>
            <person name="Richardson D.L."/>
            <person name="Howell J.K."/>
            <person name="Chidambaram M."/>
            <person name="Utterback T.R."/>
            <person name="McDonald L.A."/>
            <person name="Artiach P."/>
            <person name="Bowman C."/>
            <person name="Cotton M.D."/>
            <person name="Fujii C."/>
            <person name="Garland S.A."/>
            <person name="Hatch B."/>
            <person name="Horst K."/>
            <person name="Roberts K.M."/>
            <person name="Sandusky M."/>
            <person name="Weidman J.F."/>
            <person name="Smith H.O."/>
            <person name="Venter J.C."/>
        </authorList>
    </citation>
    <scope>NUCLEOTIDE SEQUENCE [LARGE SCALE GENOMIC DNA]</scope>
    <source>
        <strain>Nichols</strain>
    </source>
</reference>
<proteinExistence type="inferred from homology"/>
<gene>
    <name evidence="1" type="primary">rpsR</name>
    <name type="ordered locus">TP_0061</name>
</gene>
<dbReference type="EMBL" id="AE000520">
    <property type="protein sequence ID" value="AAC65056.1"/>
    <property type="molecule type" value="Genomic_DNA"/>
</dbReference>
<dbReference type="PIR" id="E71370">
    <property type="entry name" value="E71370"/>
</dbReference>
<dbReference type="RefSeq" id="WP_010881510.1">
    <property type="nucleotide sequence ID" value="NC_021490.2"/>
</dbReference>
<dbReference type="SMR" id="O83100"/>
<dbReference type="IntAct" id="O83100">
    <property type="interactions" value="10"/>
</dbReference>
<dbReference type="STRING" id="243276.TP_0061"/>
<dbReference type="EnsemblBacteria" id="AAC65056">
    <property type="protein sequence ID" value="AAC65056"/>
    <property type="gene ID" value="TP_0061"/>
</dbReference>
<dbReference type="GeneID" id="93875856"/>
<dbReference type="KEGG" id="tpa:TP_0061"/>
<dbReference type="KEGG" id="tpw:TPANIC_0061"/>
<dbReference type="eggNOG" id="COG0238">
    <property type="taxonomic scope" value="Bacteria"/>
</dbReference>
<dbReference type="HOGENOM" id="CLU_148710_0_3_12"/>
<dbReference type="OrthoDB" id="9812008at2"/>
<dbReference type="Proteomes" id="UP000000811">
    <property type="component" value="Chromosome"/>
</dbReference>
<dbReference type="GO" id="GO:0022627">
    <property type="term" value="C:cytosolic small ribosomal subunit"/>
    <property type="evidence" value="ECO:0007669"/>
    <property type="project" value="TreeGrafter"/>
</dbReference>
<dbReference type="GO" id="GO:0070181">
    <property type="term" value="F:small ribosomal subunit rRNA binding"/>
    <property type="evidence" value="ECO:0007669"/>
    <property type="project" value="TreeGrafter"/>
</dbReference>
<dbReference type="GO" id="GO:0003735">
    <property type="term" value="F:structural constituent of ribosome"/>
    <property type="evidence" value="ECO:0007669"/>
    <property type="project" value="InterPro"/>
</dbReference>
<dbReference type="GO" id="GO:0006412">
    <property type="term" value="P:translation"/>
    <property type="evidence" value="ECO:0007669"/>
    <property type="project" value="UniProtKB-UniRule"/>
</dbReference>
<dbReference type="Gene3D" id="4.10.640.10">
    <property type="entry name" value="Ribosomal protein S18"/>
    <property type="match status" value="1"/>
</dbReference>
<dbReference type="HAMAP" id="MF_00270">
    <property type="entry name" value="Ribosomal_bS18"/>
    <property type="match status" value="1"/>
</dbReference>
<dbReference type="InterPro" id="IPR001648">
    <property type="entry name" value="Ribosomal_bS18"/>
</dbReference>
<dbReference type="InterPro" id="IPR036870">
    <property type="entry name" value="Ribosomal_bS18_sf"/>
</dbReference>
<dbReference type="NCBIfam" id="TIGR00165">
    <property type="entry name" value="S18"/>
    <property type="match status" value="1"/>
</dbReference>
<dbReference type="PANTHER" id="PTHR13479">
    <property type="entry name" value="30S RIBOSOMAL PROTEIN S18"/>
    <property type="match status" value="1"/>
</dbReference>
<dbReference type="PANTHER" id="PTHR13479:SF40">
    <property type="entry name" value="SMALL RIBOSOMAL SUBUNIT PROTEIN BS18M"/>
    <property type="match status" value="1"/>
</dbReference>
<dbReference type="Pfam" id="PF01084">
    <property type="entry name" value="Ribosomal_S18"/>
    <property type="match status" value="1"/>
</dbReference>
<dbReference type="PRINTS" id="PR00974">
    <property type="entry name" value="RIBOSOMALS18"/>
</dbReference>
<dbReference type="SUPFAM" id="SSF46911">
    <property type="entry name" value="Ribosomal protein S18"/>
    <property type="match status" value="1"/>
</dbReference>
<organism>
    <name type="scientific">Treponema pallidum (strain Nichols)</name>
    <dbReference type="NCBI Taxonomy" id="243276"/>
    <lineage>
        <taxon>Bacteria</taxon>
        <taxon>Pseudomonadati</taxon>
        <taxon>Spirochaetota</taxon>
        <taxon>Spirochaetia</taxon>
        <taxon>Spirochaetales</taxon>
        <taxon>Treponemataceae</taxon>
        <taxon>Treponema</taxon>
    </lineage>
</organism>
<protein>
    <recommendedName>
        <fullName evidence="1">Small ribosomal subunit protein bS18</fullName>
    </recommendedName>
    <alternativeName>
        <fullName evidence="3">30S ribosomal protein S18</fullName>
    </alternativeName>
</protein>